<dbReference type="EC" id="3.6.5.-" evidence="1"/>
<dbReference type="EMBL" id="CP000116">
    <property type="protein sequence ID" value="AAZ96819.1"/>
    <property type="molecule type" value="Genomic_DNA"/>
</dbReference>
<dbReference type="RefSeq" id="WP_011311378.1">
    <property type="nucleotide sequence ID" value="NC_007404.1"/>
</dbReference>
<dbReference type="SMR" id="Q3SKG2"/>
<dbReference type="STRING" id="292415.Tbd_0866"/>
<dbReference type="KEGG" id="tbd:Tbd_0866"/>
<dbReference type="eggNOG" id="COG0536">
    <property type="taxonomic scope" value="Bacteria"/>
</dbReference>
<dbReference type="HOGENOM" id="CLU_011747_2_0_4"/>
<dbReference type="OrthoDB" id="9807318at2"/>
<dbReference type="Proteomes" id="UP000008291">
    <property type="component" value="Chromosome"/>
</dbReference>
<dbReference type="GO" id="GO:0005737">
    <property type="term" value="C:cytoplasm"/>
    <property type="evidence" value="ECO:0007669"/>
    <property type="project" value="UniProtKB-SubCell"/>
</dbReference>
<dbReference type="GO" id="GO:0005525">
    <property type="term" value="F:GTP binding"/>
    <property type="evidence" value="ECO:0007669"/>
    <property type="project" value="UniProtKB-UniRule"/>
</dbReference>
<dbReference type="GO" id="GO:0003924">
    <property type="term" value="F:GTPase activity"/>
    <property type="evidence" value="ECO:0007669"/>
    <property type="project" value="UniProtKB-UniRule"/>
</dbReference>
<dbReference type="GO" id="GO:0000287">
    <property type="term" value="F:magnesium ion binding"/>
    <property type="evidence" value="ECO:0007669"/>
    <property type="project" value="InterPro"/>
</dbReference>
<dbReference type="GO" id="GO:0042254">
    <property type="term" value="P:ribosome biogenesis"/>
    <property type="evidence" value="ECO:0007669"/>
    <property type="project" value="UniProtKB-UniRule"/>
</dbReference>
<dbReference type="CDD" id="cd01898">
    <property type="entry name" value="Obg"/>
    <property type="match status" value="1"/>
</dbReference>
<dbReference type="FunFam" id="2.70.210.12:FF:000001">
    <property type="entry name" value="GTPase Obg"/>
    <property type="match status" value="1"/>
</dbReference>
<dbReference type="Gene3D" id="2.70.210.12">
    <property type="entry name" value="GTP1/OBG domain"/>
    <property type="match status" value="1"/>
</dbReference>
<dbReference type="Gene3D" id="3.40.50.300">
    <property type="entry name" value="P-loop containing nucleotide triphosphate hydrolases"/>
    <property type="match status" value="1"/>
</dbReference>
<dbReference type="HAMAP" id="MF_01454">
    <property type="entry name" value="GTPase_Obg"/>
    <property type="match status" value="1"/>
</dbReference>
<dbReference type="InterPro" id="IPR031167">
    <property type="entry name" value="G_OBG"/>
</dbReference>
<dbReference type="InterPro" id="IPR006073">
    <property type="entry name" value="GTP-bd"/>
</dbReference>
<dbReference type="InterPro" id="IPR014100">
    <property type="entry name" value="GTP-bd_Obg/CgtA"/>
</dbReference>
<dbReference type="InterPro" id="IPR006074">
    <property type="entry name" value="GTP1-OBG_CS"/>
</dbReference>
<dbReference type="InterPro" id="IPR006169">
    <property type="entry name" value="GTP1_OBG_dom"/>
</dbReference>
<dbReference type="InterPro" id="IPR036726">
    <property type="entry name" value="GTP1_OBG_dom_sf"/>
</dbReference>
<dbReference type="InterPro" id="IPR045086">
    <property type="entry name" value="OBG_GTPase"/>
</dbReference>
<dbReference type="InterPro" id="IPR027417">
    <property type="entry name" value="P-loop_NTPase"/>
</dbReference>
<dbReference type="NCBIfam" id="TIGR02729">
    <property type="entry name" value="Obg_CgtA"/>
    <property type="match status" value="1"/>
</dbReference>
<dbReference type="NCBIfam" id="NF008955">
    <property type="entry name" value="PRK12297.1"/>
    <property type="match status" value="1"/>
</dbReference>
<dbReference type="NCBIfam" id="NF008956">
    <property type="entry name" value="PRK12299.1"/>
    <property type="match status" value="1"/>
</dbReference>
<dbReference type="PANTHER" id="PTHR11702">
    <property type="entry name" value="DEVELOPMENTALLY REGULATED GTP-BINDING PROTEIN-RELATED"/>
    <property type="match status" value="1"/>
</dbReference>
<dbReference type="PANTHER" id="PTHR11702:SF31">
    <property type="entry name" value="MITOCHONDRIAL RIBOSOME-ASSOCIATED GTPASE 2"/>
    <property type="match status" value="1"/>
</dbReference>
<dbReference type="Pfam" id="PF01018">
    <property type="entry name" value="GTP1_OBG"/>
    <property type="match status" value="1"/>
</dbReference>
<dbReference type="Pfam" id="PF01926">
    <property type="entry name" value="MMR_HSR1"/>
    <property type="match status" value="1"/>
</dbReference>
<dbReference type="PIRSF" id="PIRSF002401">
    <property type="entry name" value="GTP_bd_Obg/CgtA"/>
    <property type="match status" value="1"/>
</dbReference>
<dbReference type="PRINTS" id="PR00326">
    <property type="entry name" value="GTP1OBG"/>
</dbReference>
<dbReference type="SUPFAM" id="SSF82051">
    <property type="entry name" value="Obg GTP-binding protein N-terminal domain"/>
    <property type="match status" value="1"/>
</dbReference>
<dbReference type="SUPFAM" id="SSF52540">
    <property type="entry name" value="P-loop containing nucleoside triphosphate hydrolases"/>
    <property type="match status" value="1"/>
</dbReference>
<dbReference type="PROSITE" id="PS51710">
    <property type="entry name" value="G_OBG"/>
    <property type="match status" value="1"/>
</dbReference>
<dbReference type="PROSITE" id="PS00905">
    <property type="entry name" value="GTP1_OBG"/>
    <property type="match status" value="1"/>
</dbReference>
<dbReference type="PROSITE" id="PS51883">
    <property type="entry name" value="OBG"/>
    <property type="match status" value="1"/>
</dbReference>
<comment type="function">
    <text evidence="1">An essential GTPase which binds GTP, GDP and possibly (p)ppGpp with moderate affinity, with high nucleotide exchange rates and a fairly low GTP hydrolysis rate. Plays a role in control of the cell cycle, stress response, ribosome biogenesis and in those bacteria that undergo differentiation, in morphogenesis control.</text>
</comment>
<comment type="cofactor">
    <cofactor evidence="1">
        <name>Mg(2+)</name>
        <dbReference type="ChEBI" id="CHEBI:18420"/>
    </cofactor>
</comment>
<comment type="subunit">
    <text evidence="1">Monomer.</text>
</comment>
<comment type="subcellular location">
    <subcellularLocation>
        <location evidence="1">Cytoplasm</location>
    </subcellularLocation>
</comment>
<comment type="similarity">
    <text evidence="1">Belongs to the TRAFAC class OBG-HflX-like GTPase superfamily. OBG GTPase family.</text>
</comment>
<gene>
    <name evidence="1" type="primary">obg</name>
    <name type="ordered locus">Tbd_0866</name>
</gene>
<name>OBG_THIDA</name>
<organism>
    <name type="scientific">Thiobacillus denitrificans (strain ATCC 25259 / T1)</name>
    <dbReference type="NCBI Taxonomy" id="292415"/>
    <lineage>
        <taxon>Bacteria</taxon>
        <taxon>Pseudomonadati</taxon>
        <taxon>Pseudomonadota</taxon>
        <taxon>Betaproteobacteria</taxon>
        <taxon>Nitrosomonadales</taxon>
        <taxon>Thiobacillaceae</taxon>
        <taxon>Thiobacillus</taxon>
    </lineage>
</organism>
<proteinExistence type="inferred from homology"/>
<keyword id="KW-0963">Cytoplasm</keyword>
<keyword id="KW-0342">GTP-binding</keyword>
<keyword id="KW-0378">Hydrolase</keyword>
<keyword id="KW-0460">Magnesium</keyword>
<keyword id="KW-0479">Metal-binding</keyword>
<keyword id="KW-0547">Nucleotide-binding</keyword>
<keyword id="KW-1185">Reference proteome</keyword>
<evidence type="ECO:0000255" key="1">
    <source>
        <dbReference type="HAMAP-Rule" id="MF_01454"/>
    </source>
</evidence>
<evidence type="ECO:0000255" key="2">
    <source>
        <dbReference type="PROSITE-ProRule" id="PRU01231"/>
    </source>
</evidence>
<evidence type="ECO:0000256" key="3">
    <source>
        <dbReference type="SAM" id="MobiDB-lite"/>
    </source>
</evidence>
<reference key="1">
    <citation type="journal article" date="2006" name="J. Bacteriol.">
        <title>The genome sequence of the obligately chemolithoautotrophic, facultatively anaerobic bacterium Thiobacillus denitrificans.</title>
        <authorList>
            <person name="Beller H.R."/>
            <person name="Chain P.S."/>
            <person name="Letain T.E."/>
            <person name="Chakicherla A."/>
            <person name="Larimer F.W."/>
            <person name="Richardson P.M."/>
            <person name="Coleman M.A."/>
            <person name="Wood A.P."/>
            <person name="Kelly D.P."/>
        </authorList>
    </citation>
    <scope>NUCLEOTIDE SEQUENCE [LARGE SCALE GENOMIC DNA]</scope>
    <source>
        <strain>ATCC 25259 / T1</strain>
    </source>
</reference>
<accession>Q3SKG2</accession>
<feature type="chain" id="PRO_0000386363" description="GTPase Obg">
    <location>
        <begin position="1"/>
        <end position="350"/>
    </location>
</feature>
<feature type="domain" description="Obg" evidence="2">
    <location>
        <begin position="1"/>
        <end position="159"/>
    </location>
</feature>
<feature type="domain" description="OBG-type G" evidence="1">
    <location>
        <begin position="160"/>
        <end position="334"/>
    </location>
</feature>
<feature type="region of interest" description="Disordered" evidence="3">
    <location>
        <begin position="17"/>
        <end position="43"/>
    </location>
</feature>
<feature type="compositionally biased region" description="Gly residues" evidence="3">
    <location>
        <begin position="33"/>
        <end position="43"/>
    </location>
</feature>
<feature type="binding site" evidence="1">
    <location>
        <begin position="166"/>
        <end position="173"/>
    </location>
    <ligand>
        <name>GTP</name>
        <dbReference type="ChEBI" id="CHEBI:37565"/>
    </ligand>
</feature>
<feature type="binding site" evidence="1">
    <location>
        <position position="173"/>
    </location>
    <ligand>
        <name>Mg(2+)</name>
        <dbReference type="ChEBI" id="CHEBI:18420"/>
    </ligand>
</feature>
<feature type="binding site" evidence="1">
    <location>
        <begin position="191"/>
        <end position="195"/>
    </location>
    <ligand>
        <name>GTP</name>
        <dbReference type="ChEBI" id="CHEBI:37565"/>
    </ligand>
</feature>
<feature type="binding site" evidence="1">
    <location>
        <position position="193"/>
    </location>
    <ligand>
        <name>Mg(2+)</name>
        <dbReference type="ChEBI" id="CHEBI:18420"/>
    </ligand>
</feature>
<feature type="binding site" evidence="1">
    <location>
        <begin position="213"/>
        <end position="216"/>
    </location>
    <ligand>
        <name>GTP</name>
        <dbReference type="ChEBI" id="CHEBI:37565"/>
    </ligand>
</feature>
<feature type="binding site" evidence="1">
    <location>
        <begin position="284"/>
        <end position="287"/>
    </location>
    <ligand>
        <name>GTP</name>
        <dbReference type="ChEBI" id="CHEBI:37565"/>
    </ligand>
</feature>
<feature type="binding site" evidence="1">
    <location>
        <begin position="315"/>
        <end position="317"/>
    </location>
    <ligand>
        <name>GTP</name>
        <dbReference type="ChEBI" id="CHEBI:37565"/>
    </ligand>
</feature>
<sequence>MKFIDEAKITVLAGKGGDGSASFRREKYIPKGGPDGGDGGRGGSVYAVADRNVNTLVEFRYTRIFKAQKGENGRGAQCYGKAGDDLTIRVPVGTVFSDVNSGEVVADLAEDGETVCLAKGGKGGLGNIHFKSSTNRAPRQHTLGEPGEEWELALELKVLADVGLLGMPNAGKSTFIRAVSAARPKVADYPFTTLAPNLGVVRVDSERSFVIADIPGLIEGAAEGAGLGHQFLRHLQRTRLLLHLVDISPRWEAGDPVHEARAIVEELRKYDQALYEKPRWLVLNKLDMVDEGEREAVVAKFVEDYGWNGPVFAISALDGSGCSALTYAVMDYLGMLAPRHEAEDPAPPAS</sequence>
<protein>
    <recommendedName>
        <fullName evidence="1">GTPase Obg</fullName>
        <ecNumber evidence="1">3.6.5.-</ecNumber>
    </recommendedName>
    <alternativeName>
        <fullName evidence="1">GTP-binding protein Obg</fullName>
    </alternativeName>
</protein>